<feature type="chain" id="PRO_0000204026" description="Ice nucleation protein">
    <location>
        <begin position="1"/>
        <end position="1196"/>
    </location>
</feature>
<feature type="region of interest" description="Octapeptide periodicity">
    <location>
        <begin position="172"/>
        <end position="1147"/>
    </location>
</feature>
<feature type="region of interest" description="Disordered" evidence="2">
    <location>
        <begin position="269"/>
        <end position="304"/>
    </location>
</feature>
<feature type="region of interest" description="Disordered" evidence="2">
    <location>
        <begin position="319"/>
        <end position="352"/>
    </location>
</feature>
<feature type="region of interest" description="Disordered" evidence="2">
    <location>
        <begin position="415"/>
        <end position="442"/>
    </location>
</feature>
<feature type="compositionally biased region" description="Polar residues" evidence="2">
    <location>
        <begin position="271"/>
        <end position="298"/>
    </location>
</feature>
<feature type="compositionally biased region" description="Polar residues" evidence="2">
    <location>
        <begin position="319"/>
        <end position="346"/>
    </location>
</feature>
<dbReference type="EMBL" id="AJ001086">
    <property type="protein sequence ID" value="CAA04521.1"/>
    <property type="molecule type" value="Genomic_DNA"/>
</dbReference>
<dbReference type="GO" id="GO:0009279">
    <property type="term" value="C:cell outer membrane"/>
    <property type="evidence" value="ECO:0007669"/>
    <property type="project" value="UniProtKB-SubCell"/>
</dbReference>
<dbReference type="GO" id="GO:0050825">
    <property type="term" value="F:ice binding"/>
    <property type="evidence" value="ECO:0007669"/>
    <property type="project" value="UniProtKB-KW"/>
</dbReference>
<dbReference type="InterPro" id="IPR000258">
    <property type="entry name" value="Ice_nucleatn"/>
</dbReference>
<dbReference type="PANTHER" id="PTHR31294">
    <property type="match status" value="1"/>
</dbReference>
<dbReference type="PANTHER" id="PTHR31294:SF8">
    <property type="entry name" value="KERATIN-ASSOCIATED PROTEIN 21-1-RELATED"/>
    <property type="match status" value="1"/>
</dbReference>
<dbReference type="Pfam" id="PF00818">
    <property type="entry name" value="Ice_nucleation"/>
    <property type="match status" value="39"/>
</dbReference>
<dbReference type="PRINTS" id="PR00327">
    <property type="entry name" value="ICENUCLEATN"/>
</dbReference>
<dbReference type="SUPFAM" id="SSF69349">
    <property type="entry name" value="Phage fibre proteins"/>
    <property type="match status" value="7"/>
</dbReference>
<dbReference type="PROSITE" id="PS00314">
    <property type="entry name" value="ICE_NUCLEATION"/>
    <property type="match status" value="42"/>
</dbReference>
<organism>
    <name type="scientific">Pseudomonas syringae</name>
    <dbReference type="NCBI Taxonomy" id="317"/>
    <lineage>
        <taxon>Bacteria</taxon>
        <taxon>Pseudomonadati</taxon>
        <taxon>Pseudomonadota</taxon>
        <taxon>Gammaproteobacteria</taxon>
        <taxon>Pseudomonadales</taxon>
        <taxon>Pseudomonadaceae</taxon>
        <taxon>Pseudomonas</taxon>
    </lineage>
</organism>
<keyword id="KW-0998">Cell outer membrane</keyword>
<keyword id="KW-0387">Ice nucleation</keyword>
<keyword id="KW-0472">Membrane</keyword>
<keyword id="KW-0677">Repeat</keyword>
<proteinExistence type="inferred from homology"/>
<sequence>MNIDKALVLRTCANNMADHCGLIWPASGTVESKYWQSTRRHENGLVGLLWGAGTSAFLSVHADARWKVCEVAVADIIGLEEPGMVKFPRAEVVHVGDRISASHFISARQADPASTPTPTPTPMATPTPAAANIALPVVEQPSHEVFDVALVSAAAPSVNTLPVTTPQNLQTATYGSTLSGDNNSRLIAGYGSNETAGNHSDLIAGYGSTGTAGSDSSLVAGYGSTQTAGGDSALTAGYGSTQTAREGSNLTAGYGSTGTAGSDSSLIAGYGSTQTSGEDSSLTAGYGSTQTAQEGSNLTAGYGSTGTAGSDSSLIAGYGSTQTSGGDSSLTAGYGSTQTAQEGSNLTSGYGSTGTAGADSSLIAGYGSTQTSGSDSALTAGYGSTQTAQEGSNLTAGYGSTGTAGSDSSLIAGYGSTQTSGSDSSLTAGYGSTQTAQEGSNLTAGYGSTGTAGVDSSLIAGYGSTQTSGSDSALTAGYGSTQTAQEGSNLTAGYGSTGTAGADSSLIAGYGSTQTSGSESSLTAGYGSTQTAREGSTLTAGYGSTGTAGADSSLIAGYGSTQTSGSDSSLTAGYGSTQTAQQGSVLTSGYGSTQTAGAASNLTTGYGSTGTAGHESFIIAGYGSTQTAGHKSILTAGYGSTQTARDGSDLVAGYGSTGTAGSGSSLIAGYGSTQTASYKSMLTAGYGSTQTAREHSDLVAGYGSTSTAGSNSSLIAGYGSTQTAGFKSIMTAGYGSTQTAQERSDLVAGYGSTSTAGYSSSLIAGYGSTQTAGYGSTLTTGYGSTQTAQENSSLTTGYGSTSTAGYSSSLIAGYGSTQTAGYESTLTAGYGSTQTAQERSDLVTGYGSTSTAGYASSLIAGYGSTQTAGYESTLTAGYGSTQTAQENSSLTTGYGSTSTAGFASSLIAGYGSTQTAGYKSTLTAGYGSTQTAEYGSSLTAGYGSTATAGQDSSLIAGYGSTLTSGIRSFLTAGYGSTLIAGLRSVLIAGYGSSLTSGIRSTLTAGYGSNQIASYGSSLIAGHESIQVAGNKSMLIAGKGSSQTAGFRSTLIAGAGSVQLAGDRSRLIAGADSNQTAGDRSKLLAGNNSYLTAGDRSKLTGGHDCTLMAGDQSRLTAGKNSILTAGARSKLIGSEGSTLSAGEDSTLIFRLWDGKRYRQLVARTGENGVEADIPYYVNEDDDIVDKPDEDDDWIEVE</sequence>
<name>ICEV_PSESX</name>
<accession>O33479</accession>
<evidence type="ECO:0000250" key="1"/>
<evidence type="ECO:0000256" key="2">
    <source>
        <dbReference type="SAM" id="MobiDB-lite"/>
    </source>
</evidence>
<evidence type="ECO:0000305" key="3"/>
<protein>
    <recommendedName>
        <fullName>Ice nucleation protein</fullName>
    </recommendedName>
</protein>
<reference key="1">
    <citation type="journal article" date="1997" name="FEBS Lett.">
        <title>Molecular organisation of the ice nucleation protein InaV from Pseudomonas syringae.</title>
        <authorList>
            <person name="Schmid D."/>
            <person name="Pridmore D."/>
            <person name="Capitani G."/>
            <person name="Battistutta R."/>
            <person name="Neeser J.-R."/>
            <person name="Jann A."/>
        </authorList>
    </citation>
    <scope>NUCLEOTIDE SEQUENCE [GENOMIC DNA]</scope>
    <source>
        <strain>INA5</strain>
    </source>
</reference>
<comment type="function">
    <text>Ice nucleation proteins enable bacteria to nucleate crystallization in supercooled water.</text>
</comment>
<comment type="subunit">
    <text>Membrane environment or aggregation seems to be required for ice nucleation activity.</text>
</comment>
<comment type="subcellular location">
    <subcellularLocation>
        <location evidence="1">Cell outer membrane</location>
        <topology evidence="1">Peripheral membrane protein</topology>
    </subcellularLocation>
</comment>
<comment type="domain">
    <text>Contains many imperfect repeats of a consensus octapeptide A-G-Y-G-S-T-L-T; further on a 16-residue and a regional 48-residue periodicity is superimposed.</text>
</comment>
<comment type="similarity">
    <text evidence="3">Belongs to the bacterial ice nucleation protein family.</text>
</comment>
<gene>
    <name type="primary">inaV</name>
</gene>